<gene>
    <name evidence="1" type="primary">grpE</name>
    <name type="ordered locus">HEAR2648</name>
</gene>
<feature type="chain" id="PRO_1000137578" description="Protein GrpE">
    <location>
        <begin position="1"/>
        <end position="178"/>
    </location>
</feature>
<feature type="region of interest" description="Disordered" evidence="2">
    <location>
        <begin position="1"/>
        <end position="26"/>
    </location>
</feature>
<evidence type="ECO:0000255" key="1">
    <source>
        <dbReference type="HAMAP-Rule" id="MF_01151"/>
    </source>
</evidence>
<evidence type="ECO:0000256" key="2">
    <source>
        <dbReference type="SAM" id="MobiDB-lite"/>
    </source>
</evidence>
<comment type="function">
    <text evidence="1">Participates actively in the response to hyperosmotic and heat shock by preventing the aggregation of stress-denatured proteins, in association with DnaK and GrpE. It is the nucleotide exchange factor for DnaK and may function as a thermosensor. Unfolded proteins bind initially to DnaJ; upon interaction with the DnaJ-bound protein, DnaK hydrolyzes its bound ATP, resulting in the formation of a stable complex. GrpE releases ADP from DnaK; ATP binding to DnaK triggers the release of the substrate protein, thus completing the reaction cycle. Several rounds of ATP-dependent interactions between DnaJ, DnaK and GrpE are required for fully efficient folding.</text>
</comment>
<comment type="subunit">
    <text evidence="1">Homodimer.</text>
</comment>
<comment type="subcellular location">
    <subcellularLocation>
        <location evidence="1">Cytoplasm</location>
    </subcellularLocation>
</comment>
<comment type="similarity">
    <text evidence="1">Belongs to the GrpE family.</text>
</comment>
<protein>
    <recommendedName>
        <fullName evidence="1">Protein GrpE</fullName>
    </recommendedName>
    <alternativeName>
        <fullName evidence="1">HSP-70 cofactor</fullName>
    </alternativeName>
</protein>
<keyword id="KW-0143">Chaperone</keyword>
<keyword id="KW-0963">Cytoplasm</keyword>
<keyword id="KW-1185">Reference proteome</keyword>
<keyword id="KW-0346">Stress response</keyword>
<name>GRPE_HERAR</name>
<organism>
    <name type="scientific">Herminiimonas arsenicoxydans</name>
    <dbReference type="NCBI Taxonomy" id="204773"/>
    <lineage>
        <taxon>Bacteria</taxon>
        <taxon>Pseudomonadati</taxon>
        <taxon>Pseudomonadota</taxon>
        <taxon>Betaproteobacteria</taxon>
        <taxon>Burkholderiales</taxon>
        <taxon>Oxalobacteraceae</taxon>
        <taxon>Herminiimonas</taxon>
    </lineage>
</organism>
<reference key="1">
    <citation type="journal article" date="2007" name="PLoS Genet.">
        <title>A tale of two oxidation states: bacterial colonization of arsenic-rich environments.</title>
        <authorList>
            <person name="Muller D."/>
            <person name="Medigue C."/>
            <person name="Koechler S."/>
            <person name="Barbe V."/>
            <person name="Barakat M."/>
            <person name="Talla E."/>
            <person name="Bonnefoy V."/>
            <person name="Krin E."/>
            <person name="Arsene-Ploetze F."/>
            <person name="Carapito C."/>
            <person name="Chandler M."/>
            <person name="Cournoyer B."/>
            <person name="Cruveiller S."/>
            <person name="Dossat C."/>
            <person name="Duval S."/>
            <person name="Heymann M."/>
            <person name="Leize E."/>
            <person name="Lieutaud A."/>
            <person name="Lievremont D."/>
            <person name="Makita Y."/>
            <person name="Mangenot S."/>
            <person name="Nitschke W."/>
            <person name="Ortet P."/>
            <person name="Perdrial N."/>
            <person name="Schoepp B."/>
            <person name="Siguier P."/>
            <person name="Simeonova D.D."/>
            <person name="Rouy Z."/>
            <person name="Segurens B."/>
            <person name="Turlin E."/>
            <person name="Vallenet D."/>
            <person name="van Dorsselaer A."/>
            <person name="Weiss S."/>
            <person name="Weissenbach J."/>
            <person name="Lett M.-C."/>
            <person name="Danchin A."/>
            <person name="Bertin P.N."/>
        </authorList>
    </citation>
    <scope>NUCLEOTIDE SEQUENCE [LARGE SCALE GENOMIC DNA]</scope>
    <source>
        <strain>ULPAs1</strain>
    </source>
</reference>
<dbReference type="EMBL" id="CU207211">
    <property type="protein sequence ID" value="CAL62770.1"/>
    <property type="molecule type" value="Genomic_DNA"/>
</dbReference>
<dbReference type="SMR" id="A4G8D3"/>
<dbReference type="STRING" id="204773.HEAR2648"/>
<dbReference type="KEGG" id="har:HEAR2648"/>
<dbReference type="eggNOG" id="COG0576">
    <property type="taxonomic scope" value="Bacteria"/>
</dbReference>
<dbReference type="HOGENOM" id="CLU_057217_6_1_4"/>
<dbReference type="OrthoDB" id="9789811at2"/>
<dbReference type="Proteomes" id="UP000006697">
    <property type="component" value="Chromosome"/>
</dbReference>
<dbReference type="GO" id="GO:0005829">
    <property type="term" value="C:cytosol"/>
    <property type="evidence" value="ECO:0007669"/>
    <property type="project" value="TreeGrafter"/>
</dbReference>
<dbReference type="GO" id="GO:0000774">
    <property type="term" value="F:adenyl-nucleotide exchange factor activity"/>
    <property type="evidence" value="ECO:0007669"/>
    <property type="project" value="InterPro"/>
</dbReference>
<dbReference type="GO" id="GO:0042803">
    <property type="term" value="F:protein homodimerization activity"/>
    <property type="evidence" value="ECO:0007669"/>
    <property type="project" value="InterPro"/>
</dbReference>
<dbReference type="GO" id="GO:0051087">
    <property type="term" value="F:protein-folding chaperone binding"/>
    <property type="evidence" value="ECO:0007669"/>
    <property type="project" value="InterPro"/>
</dbReference>
<dbReference type="GO" id="GO:0051082">
    <property type="term" value="F:unfolded protein binding"/>
    <property type="evidence" value="ECO:0007669"/>
    <property type="project" value="TreeGrafter"/>
</dbReference>
<dbReference type="GO" id="GO:0006457">
    <property type="term" value="P:protein folding"/>
    <property type="evidence" value="ECO:0007669"/>
    <property type="project" value="InterPro"/>
</dbReference>
<dbReference type="CDD" id="cd00446">
    <property type="entry name" value="GrpE"/>
    <property type="match status" value="1"/>
</dbReference>
<dbReference type="Gene3D" id="3.90.20.20">
    <property type="match status" value="1"/>
</dbReference>
<dbReference type="Gene3D" id="2.30.22.10">
    <property type="entry name" value="Head domain of nucleotide exchange factor GrpE"/>
    <property type="match status" value="1"/>
</dbReference>
<dbReference type="HAMAP" id="MF_01151">
    <property type="entry name" value="GrpE"/>
    <property type="match status" value="1"/>
</dbReference>
<dbReference type="InterPro" id="IPR000740">
    <property type="entry name" value="GrpE"/>
</dbReference>
<dbReference type="InterPro" id="IPR013805">
    <property type="entry name" value="GrpE_coiled_coil"/>
</dbReference>
<dbReference type="InterPro" id="IPR009012">
    <property type="entry name" value="GrpE_head"/>
</dbReference>
<dbReference type="NCBIfam" id="NF010737">
    <property type="entry name" value="PRK14139.1"/>
    <property type="match status" value="1"/>
</dbReference>
<dbReference type="NCBIfam" id="NF010738">
    <property type="entry name" value="PRK14140.1"/>
    <property type="match status" value="1"/>
</dbReference>
<dbReference type="NCBIfam" id="NF010748">
    <property type="entry name" value="PRK14150.1"/>
    <property type="match status" value="1"/>
</dbReference>
<dbReference type="PANTHER" id="PTHR21237">
    <property type="entry name" value="GRPE PROTEIN"/>
    <property type="match status" value="1"/>
</dbReference>
<dbReference type="PANTHER" id="PTHR21237:SF23">
    <property type="entry name" value="GRPE PROTEIN HOMOLOG, MITOCHONDRIAL"/>
    <property type="match status" value="1"/>
</dbReference>
<dbReference type="Pfam" id="PF01025">
    <property type="entry name" value="GrpE"/>
    <property type="match status" value="1"/>
</dbReference>
<dbReference type="PRINTS" id="PR00773">
    <property type="entry name" value="GRPEPROTEIN"/>
</dbReference>
<dbReference type="SUPFAM" id="SSF58014">
    <property type="entry name" value="Coiled-coil domain of nucleotide exchange factor GrpE"/>
    <property type="match status" value="1"/>
</dbReference>
<dbReference type="SUPFAM" id="SSF51064">
    <property type="entry name" value="Head domain of nucleotide exchange factor GrpE"/>
    <property type="match status" value="1"/>
</dbReference>
<dbReference type="PROSITE" id="PS01071">
    <property type="entry name" value="GRPE"/>
    <property type="match status" value="1"/>
</dbReference>
<sequence length="178" mass="19683">MQDQDKYAEQAASMEEPASADAPAIVPTLEEQLAASQLQVQELQDSFLRAKAENENFRRRAQEDVTRAHKFAIEGFAEALVPVKDSLEMALQVDTPSIASLKEGVEMTLKQLSAAFEKNRLLEIKPQQGDKLDPMKHQAISVVPADQEANTIVSTLQKGYLIADRLLRPALVTVAQEK</sequence>
<accession>A4G8D3</accession>
<proteinExistence type="inferred from homology"/>